<organism>
    <name type="scientific">Streptococcus gordonii (strain Challis / ATCC 35105 / BCRC 15272 / CH1 / DL1 / V288)</name>
    <dbReference type="NCBI Taxonomy" id="467705"/>
    <lineage>
        <taxon>Bacteria</taxon>
        <taxon>Bacillati</taxon>
        <taxon>Bacillota</taxon>
        <taxon>Bacilli</taxon>
        <taxon>Lactobacillales</taxon>
        <taxon>Streptococcaceae</taxon>
        <taxon>Streptococcus</taxon>
    </lineage>
</organism>
<evidence type="ECO:0000255" key="1">
    <source>
        <dbReference type="HAMAP-Rule" id="MF_00094"/>
    </source>
</evidence>
<sequence length="364" mass="41504">MDISEIRQKIDANREKLASFRGSLDLEGLEEEIAILENKMTEPDFWDDNIAAQKTSQELNELKQTYENFHQMTDLFDESEILLDFLAEDDSVQEELEEKLAELEKMMTSYEMTLLLSEPYDNNNAILEIHPGSGGTEAQDWGDMLLRMYTRFGNAKGFKVEVLDYQAGDEAGIKSVTLSFEGPHAYGLLKSEMGVHRLVRISPFDSAKRRHTSFTSVEVMPELDDTIEVEIREDDIKMDTFRSGGAGGQNVNKVSTGVRLTHIPTGIVVQSTVDRTQYGNRDRAMKMLQAKLYQLEQEKKAAEVDSLKGDKKEISWGSQIRSYVFTPYTMVKDHRTSYEVAQVDKVMDGDLDGFIDAYLKWRLN</sequence>
<protein>
    <recommendedName>
        <fullName evidence="1">Peptide chain release factor 2</fullName>
        <shortName evidence="1">RF-2</shortName>
    </recommendedName>
</protein>
<name>RF2_STRGC</name>
<keyword id="KW-0963">Cytoplasm</keyword>
<keyword id="KW-0488">Methylation</keyword>
<keyword id="KW-0648">Protein biosynthesis</keyword>
<keyword id="KW-1185">Reference proteome</keyword>
<proteinExistence type="inferred from homology"/>
<accession>A8AY61</accession>
<reference key="1">
    <citation type="journal article" date="2007" name="J. Bacteriol.">
        <title>Genome-wide transcriptional changes in Streptococcus gordonii in response to competence signaling peptide.</title>
        <authorList>
            <person name="Vickerman M.M."/>
            <person name="Iobst S."/>
            <person name="Jesionowski A.M."/>
            <person name="Gill S.R."/>
        </authorList>
    </citation>
    <scope>NUCLEOTIDE SEQUENCE [LARGE SCALE GENOMIC DNA]</scope>
    <source>
        <strain>Challis / ATCC 35105 / BCRC 15272 / CH1 / DL1 / V288</strain>
    </source>
</reference>
<feature type="chain" id="PRO_1000075531" description="Peptide chain release factor 2">
    <location>
        <begin position="1"/>
        <end position="364"/>
    </location>
</feature>
<feature type="modified residue" description="N5-methylglutamine" evidence="1">
    <location>
        <position position="249"/>
    </location>
</feature>
<gene>
    <name evidence="1" type="primary">prfB</name>
    <name type="ordered locus">SGO_1441</name>
</gene>
<comment type="function">
    <text evidence="1">Peptide chain release factor 2 directs the termination of translation in response to the peptide chain termination codons UGA and UAA.</text>
</comment>
<comment type="subcellular location">
    <subcellularLocation>
        <location evidence="1">Cytoplasm</location>
    </subcellularLocation>
</comment>
<comment type="PTM">
    <text evidence="1">Methylated by PrmC. Methylation increases the termination efficiency of RF2.</text>
</comment>
<comment type="similarity">
    <text evidence="1">Belongs to the prokaryotic/mitochondrial release factor family.</text>
</comment>
<dbReference type="EMBL" id="CP000725">
    <property type="protein sequence ID" value="ABV09192.1"/>
    <property type="molecule type" value="Genomic_DNA"/>
</dbReference>
<dbReference type="SMR" id="A8AY61"/>
<dbReference type="STRING" id="467705.SGO_1441"/>
<dbReference type="KEGG" id="sgo:SGO_1441"/>
<dbReference type="eggNOG" id="COG1186">
    <property type="taxonomic scope" value="Bacteria"/>
</dbReference>
<dbReference type="HOGENOM" id="CLU_221244_1_0_9"/>
<dbReference type="Proteomes" id="UP000001131">
    <property type="component" value="Chromosome"/>
</dbReference>
<dbReference type="GO" id="GO:0005737">
    <property type="term" value="C:cytoplasm"/>
    <property type="evidence" value="ECO:0007669"/>
    <property type="project" value="UniProtKB-SubCell"/>
</dbReference>
<dbReference type="GO" id="GO:0016149">
    <property type="term" value="F:translation release factor activity, codon specific"/>
    <property type="evidence" value="ECO:0007669"/>
    <property type="project" value="UniProtKB-UniRule"/>
</dbReference>
<dbReference type="Gene3D" id="3.30.160.20">
    <property type="match status" value="1"/>
</dbReference>
<dbReference type="Gene3D" id="3.30.70.1660">
    <property type="match status" value="1"/>
</dbReference>
<dbReference type="Gene3D" id="1.20.58.410">
    <property type="entry name" value="Release factor"/>
    <property type="match status" value="1"/>
</dbReference>
<dbReference type="HAMAP" id="MF_00094">
    <property type="entry name" value="Rel_fac_2"/>
    <property type="match status" value="1"/>
</dbReference>
<dbReference type="InterPro" id="IPR005139">
    <property type="entry name" value="PCRF"/>
</dbReference>
<dbReference type="InterPro" id="IPR000352">
    <property type="entry name" value="Pep_chain_release_fac_I"/>
</dbReference>
<dbReference type="InterPro" id="IPR045853">
    <property type="entry name" value="Pep_chain_release_fac_I_sf"/>
</dbReference>
<dbReference type="InterPro" id="IPR004374">
    <property type="entry name" value="PrfB"/>
</dbReference>
<dbReference type="NCBIfam" id="TIGR00020">
    <property type="entry name" value="prfB"/>
    <property type="match status" value="1"/>
</dbReference>
<dbReference type="PANTHER" id="PTHR43116:SF3">
    <property type="entry name" value="CLASS I PEPTIDE CHAIN RELEASE FACTOR"/>
    <property type="match status" value="1"/>
</dbReference>
<dbReference type="PANTHER" id="PTHR43116">
    <property type="entry name" value="PEPTIDE CHAIN RELEASE FACTOR 2"/>
    <property type="match status" value="1"/>
</dbReference>
<dbReference type="Pfam" id="PF03462">
    <property type="entry name" value="PCRF"/>
    <property type="match status" value="1"/>
</dbReference>
<dbReference type="Pfam" id="PF00472">
    <property type="entry name" value="RF-1"/>
    <property type="match status" value="1"/>
</dbReference>
<dbReference type="SMART" id="SM00937">
    <property type="entry name" value="PCRF"/>
    <property type="match status" value="1"/>
</dbReference>
<dbReference type="SUPFAM" id="SSF75620">
    <property type="entry name" value="Release factor"/>
    <property type="match status" value="1"/>
</dbReference>
<dbReference type="PROSITE" id="PS00745">
    <property type="entry name" value="RF_PROK_I"/>
    <property type="match status" value="1"/>
</dbReference>